<gene>
    <name evidence="1" type="primary">tsaD</name>
    <name type="synonym">gcp</name>
    <name type="ordered locus">MT3528</name>
</gene>
<sequence length="344" mass="35091">MTTVLGIETSCDETGVGIARLDPDGTVTLLADEVASSVDEHVRFGGVVPEIASRAHLEALGPAMRRALAAAGLKQPDIVAATIGPGLAGALLVGVAAAKAYSAAWGVPFYAVNHLGGHLAADVYEHGPLPECVALLVSGGHTHLLHVRSLGEPIIELGSTVDDAAGEAYDKVARLLGLGYPGGKALDDLARTGDRDAIVFPRGMSGPADDRYAFSFSGLKTAVARYVESHAADPGFRTADIAAGFQEAVADVLTMKAVRAATALGVSTLLIAGGVAANSRLRELATQRCGEAGRTLRIPSPRLCTDNGAMIAAFAAQLVAAGAPPSPLDVPSDPGLPVMQGQVR</sequence>
<keyword id="KW-0012">Acyltransferase</keyword>
<keyword id="KW-0963">Cytoplasm</keyword>
<keyword id="KW-0408">Iron</keyword>
<keyword id="KW-0479">Metal-binding</keyword>
<keyword id="KW-1185">Reference proteome</keyword>
<keyword id="KW-0808">Transferase</keyword>
<keyword id="KW-0819">tRNA processing</keyword>
<accession>P9WHT6</accession>
<accession>L0TFB8</accession>
<accession>P65801</accession>
<accession>Q50709</accession>
<name>TSAD_MYCTO</name>
<protein>
    <recommendedName>
        <fullName evidence="1">tRNA N6-adenosine threonylcarbamoyltransferase</fullName>
        <ecNumber evidence="1">2.3.1.234</ecNumber>
    </recommendedName>
    <alternativeName>
        <fullName evidence="1">N6-L-threonylcarbamoyladenine synthase</fullName>
        <shortName evidence="1">t(6)A synthase</shortName>
    </alternativeName>
    <alternativeName>
        <fullName evidence="1">t(6)A37 threonylcarbamoyladenosine biosynthesis protein TsaD</fullName>
    </alternativeName>
    <alternativeName>
        <fullName evidence="1">tRNA threonylcarbamoyladenosine biosynthesis protein TsaD</fullName>
    </alternativeName>
</protein>
<comment type="function">
    <text evidence="1">Required for the formation of a threonylcarbamoyl group on adenosine at position 37 (t(6)A37) in tRNAs that read codons beginning with adenine. Is involved in the transfer of the threonylcarbamoyl moiety of threonylcarbamoyl-AMP (TC-AMP) to the N6 group of A37, together with TsaE and TsaB. TsaD likely plays a direct catalytic role in this reaction.</text>
</comment>
<comment type="catalytic activity">
    <reaction evidence="1">
        <text>L-threonylcarbamoyladenylate + adenosine(37) in tRNA = N(6)-L-threonylcarbamoyladenosine(37) in tRNA + AMP + H(+)</text>
        <dbReference type="Rhea" id="RHEA:37059"/>
        <dbReference type="Rhea" id="RHEA-COMP:10162"/>
        <dbReference type="Rhea" id="RHEA-COMP:10163"/>
        <dbReference type="ChEBI" id="CHEBI:15378"/>
        <dbReference type="ChEBI" id="CHEBI:73682"/>
        <dbReference type="ChEBI" id="CHEBI:74411"/>
        <dbReference type="ChEBI" id="CHEBI:74418"/>
        <dbReference type="ChEBI" id="CHEBI:456215"/>
        <dbReference type="EC" id="2.3.1.234"/>
    </reaction>
</comment>
<comment type="cofactor">
    <cofactor evidence="1">
        <name>Fe(2+)</name>
        <dbReference type="ChEBI" id="CHEBI:29033"/>
    </cofactor>
    <text evidence="1">Binds 1 Fe(2+) ion per subunit.</text>
</comment>
<comment type="subcellular location">
    <subcellularLocation>
        <location evidence="1">Cytoplasm</location>
    </subcellularLocation>
</comment>
<comment type="similarity">
    <text evidence="1">Belongs to the KAE1 / TsaD family.</text>
</comment>
<evidence type="ECO:0000255" key="1">
    <source>
        <dbReference type="HAMAP-Rule" id="MF_01445"/>
    </source>
</evidence>
<evidence type="ECO:0000256" key="2">
    <source>
        <dbReference type="SAM" id="MobiDB-lite"/>
    </source>
</evidence>
<reference key="1">
    <citation type="journal article" date="2002" name="J. Bacteriol.">
        <title>Whole-genome comparison of Mycobacterium tuberculosis clinical and laboratory strains.</title>
        <authorList>
            <person name="Fleischmann R.D."/>
            <person name="Alland D."/>
            <person name="Eisen J.A."/>
            <person name="Carpenter L."/>
            <person name="White O."/>
            <person name="Peterson J.D."/>
            <person name="DeBoy R.T."/>
            <person name="Dodson R.J."/>
            <person name="Gwinn M.L."/>
            <person name="Haft D.H."/>
            <person name="Hickey E.K."/>
            <person name="Kolonay J.F."/>
            <person name="Nelson W.C."/>
            <person name="Umayam L.A."/>
            <person name="Ermolaeva M.D."/>
            <person name="Salzberg S.L."/>
            <person name="Delcher A."/>
            <person name="Utterback T.R."/>
            <person name="Weidman J.F."/>
            <person name="Khouri H.M."/>
            <person name="Gill J."/>
            <person name="Mikula A."/>
            <person name="Bishai W."/>
            <person name="Jacobs W.R. Jr."/>
            <person name="Venter J.C."/>
            <person name="Fraser C.M."/>
        </authorList>
    </citation>
    <scope>NUCLEOTIDE SEQUENCE [LARGE SCALE GENOMIC DNA]</scope>
    <source>
        <strain>CDC 1551 / Oshkosh</strain>
    </source>
</reference>
<dbReference type="EC" id="2.3.1.234" evidence="1"/>
<dbReference type="EMBL" id="AE000516">
    <property type="protein sequence ID" value="AAK47866.1"/>
    <property type="molecule type" value="Genomic_DNA"/>
</dbReference>
<dbReference type="PIR" id="H70737">
    <property type="entry name" value="H70737"/>
</dbReference>
<dbReference type="RefSeq" id="WP_003900052.1">
    <property type="nucleotide sequence ID" value="NZ_KK341227.1"/>
</dbReference>
<dbReference type="SMR" id="P9WHT6"/>
<dbReference type="KEGG" id="mtc:MT3528"/>
<dbReference type="PATRIC" id="fig|83331.31.peg.3785"/>
<dbReference type="HOGENOM" id="CLU_023208_0_2_11"/>
<dbReference type="Proteomes" id="UP000001020">
    <property type="component" value="Chromosome"/>
</dbReference>
<dbReference type="GO" id="GO:0005737">
    <property type="term" value="C:cytoplasm"/>
    <property type="evidence" value="ECO:0007669"/>
    <property type="project" value="UniProtKB-SubCell"/>
</dbReference>
<dbReference type="GO" id="GO:0005506">
    <property type="term" value="F:iron ion binding"/>
    <property type="evidence" value="ECO:0007669"/>
    <property type="project" value="UniProtKB-UniRule"/>
</dbReference>
<dbReference type="GO" id="GO:0061711">
    <property type="term" value="F:N(6)-L-threonylcarbamoyladenine synthase activity"/>
    <property type="evidence" value="ECO:0007669"/>
    <property type="project" value="UniProtKB-EC"/>
</dbReference>
<dbReference type="GO" id="GO:0002949">
    <property type="term" value="P:tRNA threonylcarbamoyladenosine modification"/>
    <property type="evidence" value="ECO:0007669"/>
    <property type="project" value="UniProtKB-UniRule"/>
</dbReference>
<dbReference type="CDD" id="cd24133">
    <property type="entry name" value="ASKHA_NBD_TsaD_bac"/>
    <property type="match status" value="1"/>
</dbReference>
<dbReference type="FunFam" id="3.30.420.40:FF:000012">
    <property type="entry name" value="tRNA N6-adenosine threonylcarbamoyltransferase"/>
    <property type="match status" value="1"/>
</dbReference>
<dbReference type="FunFam" id="3.30.420.40:FF:000040">
    <property type="entry name" value="tRNA N6-adenosine threonylcarbamoyltransferase"/>
    <property type="match status" value="1"/>
</dbReference>
<dbReference type="Gene3D" id="3.30.420.40">
    <property type="match status" value="2"/>
</dbReference>
<dbReference type="HAMAP" id="MF_01445">
    <property type="entry name" value="TsaD"/>
    <property type="match status" value="1"/>
</dbReference>
<dbReference type="InterPro" id="IPR043129">
    <property type="entry name" value="ATPase_NBD"/>
</dbReference>
<dbReference type="InterPro" id="IPR000905">
    <property type="entry name" value="Gcp-like_dom"/>
</dbReference>
<dbReference type="InterPro" id="IPR017861">
    <property type="entry name" value="KAE1/TsaD"/>
</dbReference>
<dbReference type="InterPro" id="IPR017860">
    <property type="entry name" value="Peptidase_M22_CS"/>
</dbReference>
<dbReference type="InterPro" id="IPR022450">
    <property type="entry name" value="TsaD"/>
</dbReference>
<dbReference type="NCBIfam" id="TIGR00329">
    <property type="entry name" value="gcp_kae1"/>
    <property type="match status" value="1"/>
</dbReference>
<dbReference type="NCBIfam" id="TIGR03723">
    <property type="entry name" value="T6A_TsaD_YgjD"/>
    <property type="match status" value="1"/>
</dbReference>
<dbReference type="PANTHER" id="PTHR11735">
    <property type="entry name" value="TRNA N6-ADENOSINE THREONYLCARBAMOYLTRANSFERASE"/>
    <property type="match status" value="1"/>
</dbReference>
<dbReference type="PANTHER" id="PTHR11735:SF6">
    <property type="entry name" value="TRNA N6-ADENOSINE THREONYLCARBAMOYLTRANSFERASE, MITOCHONDRIAL"/>
    <property type="match status" value="1"/>
</dbReference>
<dbReference type="Pfam" id="PF00814">
    <property type="entry name" value="TsaD"/>
    <property type="match status" value="1"/>
</dbReference>
<dbReference type="PRINTS" id="PR00789">
    <property type="entry name" value="OSIALOPTASE"/>
</dbReference>
<dbReference type="SUPFAM" id="SSF53067">
    <property type="entry name" value="Actin-like ATPase domain"/>
    <property type="match status" value="2"/>
</dbReference>
<dbReference type="PROSITE" id="PS01016">
    <property type="entry name" value="GLYCOPROTEASE"/>
    <property type="match status" value="1"/>
</dbReference>
<organism>
    <name type="scientific">Mycobacterium tuberculosis (strain CDC 1551 / Oshkosh)</name>
    <dbReference type="NCBI Taxonomy" id="83331"/>
    <lineage>
        <taxon>Bacteria</taxon>
        <taxon>Bacillati</taxon>
        <taxon>Actinomycetota</taxon>
        <taxon>Actinomycetes</taxon>
        <taxon>Mycobacteriales</taxon>
        <taxon>Mycobacteriaceae</taxon>
        <taxon>Mycobacterium</taxon>
        <taxon>Mycobacterium tuberculosis complex</taxon>
    </lineage>
</organism>
<proteinExistence type="inferred from homology"/>
<feature type="chain" id="PRO_0000428126" description="tRNA N6-adenosine threonylcarbamoyltransferase">
    <location>
        <begin position="1"/>
        <end position="344"/>
    </location>
</feature>
<feature type="region of interest" description="Disordered" evidence="2">
    <location>
        <begin position="325"/>
        <end position="344"/>
    </location>
</feature>
<feature type="binding site" evidence="1">
    <location>
        <position position="114"/>
    </location>
    <ligand>
        <name>Fe cation</name>
        <dbReference type="ChEBI" id="CHEBI:24875"/>
    </ligand>
</feature>
<feature type="binding site" evidence="1">
    <location>
        <position position="118"/>
    </location>
    <ligand>
        <name>Fe cation</name>
        <dbReference type="ChEBI" id="CHEBI:24875"/>
    </ligand>
</feature>
<feature type="binding site" evidence="1">
    <location>
        <begin position="136"/>
        <end position="140"/>
    </location>
    <ligand>
        <name>substrate</name>
    </ligand>
</feature>
<feature type="binding site" evidence="1">
    <location>
        <position position="170"/>
    </location>
    <ligand>
        <name>substrate</name>
    </ligand>
</feature>
<feature type="binding site" evidence="1">
    <location>
        <position position="183"/>
    </location>
    <ligand>
        <name>substrate</name>
    </ligand>
</feature>
<feature type="binding site" evidence="1">
    <location>
        <position position="187"/>
    </location>
    <ligand>
        <name>substrate</name>
    </ligand>
</feature>
<feature type="binding site" evidence="1">
    <location>
        <position position="278"/>
    </location>
    <ligand>
        <name>substrate</name>
    </ligand>
</feature>
<feature type="binding site" evidence="1">
    <location>
        <position position="306"/>
    </location>
    <ligand>
        <name>Fe cation</name>
        <dbReference type="ChEBI" id="CHEBI:24875"/>
    </ligand>
</feature>